<sequence>MAGKKLKKGKSGNAAQYITRTQAVRKLQLRLSEFRRLCILKGVHPREPKKKPKGANKTYYHLKDINWLAHEPLLNTFRSIKAHDKKVRKARAKQNKELAKRLAALTPTYRLDHLVKERYPSFVDALRDLDDSLTMVHLFATLPAESKYDIPQRTVQLCRRLALEWQAYVVRSGALRRVFVSVKGYYFQAEILGQSVTWLVPHALSQVLPPDVDYKVMLTFLEFYNTLLQFVNFKLYHNLGAALPSLRVYPLFSQLRYPPVLDPRLEEAAAELAAIMKDIAGMEEEEPEEVDSEAGDEDDDDLPVLDSGTRRRRAAAAGPAPRRWRCWVRTTRTRMTTCRWVSDRAGGACGPGVDPSDEAAVCGSLFRGRVFFLGREVPREPLMLVIRAFGGVAAWDGDGSPHAETDEAVTHQIVDRPKQGHKFLSREYVQPQWVFDSANFRVLMPTDLYAPGTVPPPHLSPFVGEADEDGYTPDFAKTVRRLQDAANAARLRAAGLALKGADGSEFVGEGADGAAAADGEGAAGEDLAAAERQYASELAKEDEEAAMADIMMTRKARKMYNNMKQKEAAKQERVQQLESKKAKLAATGAAGPMGQVKPAAAGKAAAAKAAAPAKVAASGGKGAAAKGKEAPAPAKGKGTPAAKGKEAPAPAKGKGAAAAKEAPAKGGKDAAPAKRQRR</sequence>
<gene>
    <name type="ORF">CHLREDRAFT_206018</name>
</gene>
<evidence type="ECO:0000255" key="1">
    <source>
        <dbReference type="HAMAP-Rule" id="MF_03028"/>
    </source>
</evidence>
<evidence type="ECO:0000256" key="2">
    <source>
        <dbReference type="SAM" id="MobiDB-lite"/>
    </source>
</evidence>
<feature type="chain" id="PRO_0000370475" description="Pescadillo homolog">
    <location>
        <begin position="1"/>
        <end position="678"/>
    </location>
</feature>
<feature type="domain" description="BRCT" evidence="1">
    <location>
        <begin position="361"/>
        <end position="451"/>
    </location>
</feature>
<feature type="region of interest" description="Disordered" evidence="2">
    <location>
        <begin position="283"/>
        <end position="316"/>
    </location>
</feature>
<feature type="region of interest" description="Disordered" evidence="2">
    <location>
        <begin position="563"/>
        <end position="678"/>
    </location>
</feature>
<feature type="coiled-coil region" evidence="1">
    <location>
        <begin position="552"/>
        <end position="587"/>
    </location>
</feature>
<feature type="compositionally biased region" description="Acidic residues" evidence="2">
    <location>
        <begin position="283"/>
        <end position="303"/>
    </location>
</feature>
<feature type="compositionally biased region" description="Basic and acidic residues" evidence="2">
    <location>
        <begin position="564"/>
        <end position="581"/>
    </location>
</feature>
<feature type="compositionally biased region" description="Low complexity" evidence="2">
    <location>
        <begin position="597"/>
        <end position="618"/>
    </location>
</feature>
<feature type="compositionally biased region" description="Low complexity" evidence="2">
    <location>
        <begin position="630"/>
        <end position="661"/>
    </location>
</feature>
<feature type="compositionally biased region" description="Basic and acidic residues" evidence="2">
    <location>
        <begin position="662"/>
        <end position="672"/>
    </location>
</feature>
<protein>
    <recommendedName>
        <fullName evidence="1">Pescadillo homolog</fullName>
    </recommendedName>
</protein>
<comment type="function">
    <text evidence="1">Required for maturation of ribosomal RNAs and formation of the large ribosomal subunit.</text>
</comment>
<comment type="subcellular location">
    <subcellularLocation>
        <location evidence="1">Nucleus</location>
        <location evidence="1">Nucleolus</location>
    </subcellularLocation>
    <subcellularLocation>
        <location evidence="1">Nucleus</location>
        <location evidence="1">Nucleoplasm</location>
    </subcellularLocation>
</comment>
<comment type="similarity">
    <text evidence="1">Belongs to the pescadillo family.</text>
</comment>
<keyword id="KW-0175">Coiled coil</keyword>
<keyword id="KW-0539">Nucleus</keyword>
<keyword id="KW-0690">Ribosome biogenesis</keyword>
<keyword id="KW-0698">rRNA processing</keyword>
<dbReference type="EMBL" id="DS496152">
    <property type="protein sequence ID" value="EDO98904.1"/>
    <property type="molecule type" value="Genomic_DNA"/>
</dbReference>
<dbReference type="RefSeq" id="XP_001699264.1">
    <property type="nucleotide sequence ID" value="XM_001699212.1"/>
</dbReference>
<dbReference type="SMR" id="A8JBB2"/>
<dbReference type="PaxDb" id="3055-EDO98904"/>
<dbReference type="ProMEX" id="A8JBB2"/>
<dbReference type="eggNOG" id="KOG2481">
    <property type="taxonomic scope" value="Eukaryota"/>
</dbReference>
<dbReference type="HOGENOM" id="CLU_019619_1_0_1"/>
<dbReference type="GO" id="GO:0005730">
    <property type="term" value="C:nucleolus"/>
    <property type="evidence" value="ECO:0007669"/>
    <property type="project" value="UniProtKB-SubCell"/>
</dbReference>
<dbReference type="GO" id="GO:0005654">
    <property type="term" value="C:nucleoplasm"/>
    <property type="evidence" value="ECO:0007669"/>
    <property type="project" value="UniProtKB-SubCell"/>
</dbReference>
<dbReference type="GO" id="GO:0030687">
    <property type="term" value="C:preribosome, large subunit precursor"/>
    <property type="evidence" value="ECO:0007669"/>
    <property type="project" value="UniProtKB-UniRule"/>
</dbReference>
<dbReference type="GO" id="GO:0043021">
    <property type="term" value="F:ribonucleoprotein complex binding"/>
    <property type="evidence" value="ECO:0007669"/>
    <property type="project" value="UniProtKB-UniRule"/>
</dbReference>
<dbReference type="GO" id="GO:0000466">
    <property type="term" value="P:maturation of 5.8S rRNA from tricistronic rRNA transcript (SSU-rRNA, 5.8S rRNA, LSU-rRNA)"/>
    <property type="evidence" value="ECO:0007669"/>
    <property type="project" value="UniProtKB-UniRule"/>
</dbReference>
<dbReference type="GO" id="GO:0000463">
    <property type="term" value="P:maturation of LSU-rRNA from tricistronic rRNA transcript (SSU-rRNA, 5.8S rRNA, LSU-rRNA)"/>
    <property type="evidence" value="ECO:0007669"/>
    <property type="project" value="UniProtKB-UniRule"/>
</dbReference>
<dbReference type="CDD" id="cd17709">
    <property type="entry name" value="BRCT_pescadillo_like"/>
    <property type="match status" value="1"/>
</dbReference>
<dbReference type="FunFam" id="3.40.50.10190:FF:000002">
    <property type="entry name" value="Pescadillo homolog"/>
    <property type="match status" value="1"/>
</dbReference>
<dbReference type="Gene3D" id="3.40.50.10190">
    <property type="entry name" value="BRCT domain"/>
    <property type="match status" value="1"/>
</dbReference>
<dbReference type="HAMAP" id="MF_03028">
    <property type="entry name" value="Pescadillo"/>
    <property type="match status" value="1"/>
</dbReference>
<dbReference type="InterPro" id="IPR001357">
    <property type="entry name" value="BRCT_dom"/>
</dbReference>
<dbReference type="InterPro" id="IPR036420">
    <property type="entry name" value="BRCT_dom_sf"/>
</dbReference>
<dbReference type="InterPro" id="IPR010613">
    <property type="entry name" value="PES"/>
</dbReference>
<dbReference type="PANTHER" id="PTHR12221">
    <property type="entry name" value="PESCADILLO - RELATED"/>
    <property type="match status" value="1"/>
</dbReference>
<dbReference type="PANTHER" id="PTHR12221:SF6">
    <property type="entry name" value="PESCADILLO HOMOLOG"/>
    <property type="match status" value="1"/>
</dbReference>
<dbReference type="Pfam" id="PF06732">
    <property type="entry name" value="Pescadillo_N"/>
    <property type="match status" value="1"/>
</dbReference>
<dbReference type="SUPFAM" id="SSF52113">
    <property type="entry name" value="BRCT domain"/>
    <property type="match status" value="1"/>
</dbReference>
<dbReference type="PROSITE" id="PS50172">
    <property type="entry name" value="BRCT"/>
    <property type="match status" value="1"/>
</dbReference>
<name>PESC_CHLRE</name>
<proteinExistence type="inferred from homology"/>
<reference key="1">
    <citation type="journal article" date="2007" name="Science">
        <title>The Chlamydomonas genome reveals the evolution of key animal and plant functions.</title>
        <authorList>
            <person name="Merchant S.S."/>
            <person name="Prochnik S.E."/>
            <person name="Vallon O."/>
            <person name="Harris E.H."/>
            <person name="Karpowicz S.J."/>
            <person name="Witman G.B."/>
            <person name="Terry A."/>
            <person name="Salamov A."/>
            <person name="Fritz-Laylin L.K."/>
            <person name="Marechal-Drouard L."/>
            <person name="Marshall W.F."/>
            <person name="Qu L.H."/>
            <person name="Nelson D.R."/>
            <person name="Sanderfoot A.A."/>
            <person name="Spalding M.H."/>
            <person name="Kapitonov V.V."/>
            <person name="Ren Q."/>
            <person name="Ferris P."/>
            <person name="Lindquist E."/>
            <person name="Shapiro H."/>
            <person name="Lucas S.M."/>
            <person name="Grimwood J."/>
            <person name="Schmutz J."/>
            <person name="Cardol P."/>
            <person name="Cerutti H."/>
            <person name="Chanfreau G."/>
            <person name="Chen C.L."/>
            <person name="Cognat V."/>
            <person name="Croft M.T."/>
            <person name="Dent R."/>
            <person name="Dutcher S."/>
            <person name="Fernandez E."/>
            <person name="Fukuzawa H."/>
            <person name="Gonzalez-Ballester D."/>
            <person name="Gonzalez-Halphen D."/>
            <person name="Hallmann A."/>
            <person name="Hanikenne M."/>
            <person name="Hippler M."/>
            <person name="Inwood W."/>
            <person name="Jabbari K."/>
            <person name="Kalanon M."/>
            <person name="Kuras R."/>
            <person name="Lefebvre P.A."/>
            <person name="Lemaire S.D."/>
            <person name="Lobanov A.V."/>
            <person name="Lohr M."/>
            <person name="Manuell A."/>
            <person name="Meier I."/>
            <person name="Mets L."/>
            <person name="Mittag M."/>
            <person name="Mittelmeier T."/>
            <person name="Moroney J.V."/>
            <person name="Moseley J."/>
            <person name="Napoli C."/>
            <person name="Nedelcu A.M."/>
            <person name="Niyogi K."/>
            <person name="Novoselov S.V."/>
            <person name="Paulsen I.T."/>
            <person name="Pazour G.J."/>
            <person name="Purton S."/>
            <person name="Ral J.P."/>
            <person name="Riano-Pachon D.M."/>
            <person name="Riekhof W."/>
            <person name="Rymarquis L."/>
            <person name="Schroda M."/>
            <person name="Stern D."/>
            <person name="Umen J."/>
            <person name="Willows R."/>
            <person name="Wilson N."/>
            <person name="Zimmer S.L."/>
            <person name="Allmer J."/>
            <person name="Balk J."/>
            <person name="Bisova K."/>
            <person name="Chen C.J."/>
            <person name="Elias M."/>
            <person name="Gendler K."/>
            <person name="Hauser C."/>
            <person name="Lamb M.R."/>
            <person name="Ledford H."/>
            <person name="Long J.C."/>
            <person name="Minagawa J."/>
            <person name="Page M.D."/>
            <person name="Pan J."/>
            <person name="Pootakham W."/>
            <person name="Roje S."/>
            <person name="Rose A."/>
            <person name="Stahlberg E."/>
            <person name="Terauchi A.M."/>
            <person name="Yang P."/>
            <person name="Ball S."/>
            <person name="Bowler C."/>
            <person name="Dieckmann C.L."/>
            <person name="Gladyshev V.N."/>
            <person name="Green P."/>
            <person name="Jorgensen R."/>
            <person name="Mayfield S."/>
            <person name="Mueller-Roeber B."/>
            <person name="Rajamani S."/>
            <person name="Sayre R.T."/>
            <person name="Brokstein P."/>
            <person name="Dubchak I."/>
            <person name="Goodstein D."/>
            <person name="Hornick L."/>
            <person name="Huang Y.W."/>
            <person name="Jhaveri J."/>
            <person name="Luo Y."/>
            <person name="Martinez D."/>
            <person name="Ngau W.C."/>
            <person name="Otillar B."/>
            <person name="Poliakov A."/>
            <person name="Porter A."/>
            <person name="Szajkowski L."/>
            <person name="Werner G."/>
            <person name="Zhou K."/>
            <person name="Grigoriev I.V."/>
            <person name="Rokhsar D.S."/>
            <person name="Grossman A.R."/>
        </authorList>
    </citation>
    <scope>NUCLEOTIDE SEQUENCE [LARGE SCALE GENOMIC DNA]</scope>
    <source>
        <strain>CC-503</strain>
    </source>
</reference>
<organism>
    <name type="scientific">Chlamydomonas reinhardtii</name>
    <name type="common">Chlamydomonas smithii</name>
    <dbReference type="NCBI Taxonomy" id="3055"/>
    <lineage>
        <taxon>Eukaryota</taxon>
        <taxon>Viridiplantae</taxon>
        <taxon>Chlorophyta</taxon>
        <taxon>core chlorophytes</taxon>
        <taxon>Chlorophyceae</taxon>
        <taxon>CS clade</taxon>
        <taxon>Chlamydomonadales</taxon>
        <taxon>Chlamydomonadaceae</taxon>
        <taxon>Chlamydomonas</taxon>
    </lineage>
</organism>
<accession>A8JBB2</accession>